<proteinExistence type="evidence at protein level"/>
<gene>
    <name evidence="1" type="primary">cysD</name>
    <name type="ordered locus">Rv1285</name>
    <name type="ORF">MTCY373.04</name>
</gene>
<name>CYSD_MYCTU</name>
<organism>
    <name type="scientific">Mycobacterium tuberculosis (strain ATCC 25618 / H37Rv)</name>
    <dbReference type="NCBI Taxonomy" id="83332"/>
    <lineage>
        <taxon>Bacteria</taxon>
        <taxon>Bacillati</taxon>
        <taxon>Actinomycetota</taxon>
        <taxon>Actinomycetes</taxon>
        <taxon>Mycobacteriales</taxon>
        <taxon>Mycobacteriaceae</taxon>
        <taxon>Mycobacterium</taxon>
        <taxon>Mycobacterium tuberculosis complex</taxon>
    </lineage>
</organism>
<sequence length="309" mass="34889">MTSDVTVGPAPGQYQLSHLRLLEAEAIHVIREVAAEFERPVLLFSGGKDSIVMLHLALKAFRPGRLPFPVMHVDTGHNFDEVIATRDELVAAAGVRLVVASVQDDIDAGRVVETIPSRNPIQTVTLLRAIRENQFDAAFGGARRDEEKARAKERVFSFRDEFGQWDPKAQRPELWNLYNGRHHKGEHIRVFPLSNWTEFDIWSYIGAEQVRLPSIYFAHRRKVFQRDGMLLAVHRHMQPRADEPVFEATVRFRTVGDVTCTGCVESSASTVAEVIAETAVARLTERGATRADDRISEAGMEDRKRQGYF</sequence>
<feature type="chain" id="PRO_0000100667" description="Sulfate adenylyltransferase subunit 2">
    <location>
        <begin position="1"/>
        <end position="309"/>
    </location>
</feature>
<evidence type="ECO:0000255" key="1">
    <source>
        <dbReference type="HAMAP-Rule" id="MF_00064"/>
    </source>
</evidence>
<evidence type="ECO:0000269" key="2">
    <source>
    </source>
</evidence>
<evidence type="ECO:0000305" key="3"/>
<comment type="function">
    <text evidence="1">With CysN forms the ATP sulfurylase (ATPS) that catalyzes the adenylation of sulfate producing adenosine 5'-phosphosulfate (APS) and diphosphate, the first enzymatic step in sulfur assimilation pathway. APS synthesis involves the formation of a high-energy phosphoric-sulfuric acid anhydride bond driven by GTP hydrolysis by CysN coupled to ATP hydrolysis by CysD.</text>
</comment>
<comment type="catalytic activity">
    <reaction evidence="1">
        <text>sulfate + ATP + H(+) = adenosine 5'-phosphosulfate + diphosphate</text>
        <dbReference type="Rhea" id="RHEA:18133"/>
        <dbReference type="ChEBI" id="CHEBI:15378"/>
        <dbReference type="ChEBI" id="CHEBI:16189"/>
        <dbReference type="ChEBI" id="CHEBI:30616"/>
        <dbReference type="ChEBI" id="CHEBI:33019"/>
        <dbReference type="ChEBI" id="CHEBI:58243"/>
        <dbReference type="EC" id="2.7.7.4"/>
    </reaction>
</comment>
<comment type="pathway">
    <text evidence="1">Sulfur metabolism; hydrogen sulfide biosynthesis; sulfite from sulfate: step 1/3.</text>
</comment>
<comment type="subunit">
    <text evidence="2">Heterodimer composed of CysD, the smaller subunit, and CysNC.</text>
</comment>
<comment type="induction">
    <text evidence="2">Induced by sulfur limitation and oxidative stress. Repressed by the presence of cysteine.</text>
</comment>
<comment type="miscellaneous">
    <text>Was identified as a high-confidence drug target.</text>
</comment>
<comment type="similarity">
    <text evidence="1 3">Belongs to the PAPS reductase family. CysD subfamily.</text>
</comment>
<comment type="sequence caution" evidence="3">
    <conflict type="erroneous initiation">
        <sequence resource="EMBL-CDS" id="CCP44041"/>
    </conflict>
    <text>Extended N-terminus.</text>
</comment>
<reference key="1">
    <citation type="journal article" date="1998" name="Nature">
        <title>Deciphering the biology of Mycobacterium tuberculosis from the complete genome sequence.</title>
        <authorList>
            <person name="Cole S.T."/>
            <person name="Brosch R."/>
            <person name="Parkhill J."/>
            <person name="Garnier T."/>
            <person name="Churcher C.M."/>
            <person name="Harris D.E."/>
            <person name="Gordon S.V."/>
            <person name="Eiglmeier K."/>
            <person name="Gas S."/>
            <person name="Barry C.E. III"/>
            <person name="Tekaia F."/>
            <person name="Badcock K."/>
            <person name="Basham D."/>
            <person name="Brown D."/>
            <person name="Chillingworth T."/>
            <person name="Connor R."/>
            <person name="Davies R.M."/>
            <person name="Devlin K."/>
            <person name="Feltwell T."/>
            <person name="Gentles S."/>
            <person name="Hamlin N."/>
            <person name="Holroyd S."/>
            <person name="Hornsby T."/>
            <person name="Jagels K."/>
            <person name="Krogh A."/>
            <person name="McLean J."/>
            <person name="Moule S."/>
            <person name="Murphy L.D."/>
            <person name="Oliver S."/>
            <person name="Osborne J."/>
            <person name="Quail M.A."/>
            <person name="Rajandream M.A."/>
            <person name="Rogers J."/>
            <person name="Rutter S."/>
            <person name="Seeger K."/>
            <person name="Skelton S."/>
            <person name="Squares S."/>
            <person name="Squares R."/>
            <person name="Sulston J.E."/>
            <person name="Taylor K."/>
            <person name="Whitehead S."/>
            <person name="Barrell B.G."/>
        </authorList>
    </citation>
    <scope>NUCLEOTIDE SEQUENCE [LARGE SCALE GENOMIC DNA]</scope>
    <source>
        <strain>ATCC 25618 / H37Rv</strain>
    </source>
</reference>
<reference key="2">
    <citation type="journal article" date="2004" name="Microbiology">
        <title>The Mycobacterium tuberculosis cysD and cysNC genes form a stress-induced operon that encodes a tri-functional sulfate-activating complex.</title>
        <authorList>
            <person name="Pinto R."/>
            <person name="Tang Q.X."/>
            <person name="Britton W.J."/>
            <person name="Leyh T.S."/>
            <person name="Triccas J.A."/>
        </authorList>
    </citation>
    <scope>SUBUNIT</scope>
    <scope>INDUCTION</scope>
    <source>
        <strain>Mt103</strain>
    </source>
</reference>
<reference key="3">
    <citation type="journal article" date="2008" name="BMC Syst. Biol.">
        <title>targetTB: a target identification pipeline for Mycobacterium tuberculosis through an interactome, reactome and genome-scale structural analysis.</title>
        <authorList>
            <person name="Raman K."/>
            <person name="Yeturu K."/>
            <person name="Chandra N."/>
        </authorList>
    </citation>
    <scope>IDENTIFICATION AS A DRUG TARGET [LARGE SCALE ANALYSIS]</scope>
</reference>
<reference key="4">
    <citation type="journal article" date="2011" name="Mol. Cell. Proteomics">
        <title>Proteogenomic analysis of Mycobacterium tuberculosis by high resolution mass spectrometry.</title>
        <authorList>
            <person name="Kelkar D.S."/>
            <person name="Kumar D."/>
            <person name="Kumar P."/>
            <person name="Balakrishnan L."/>
            <person name="Muthusamy B."/>
            <person name="Yadav A.K."/>
            <person name="Shrivastava P."/>
            <person name="Marimuthu A."/>
            <person name="Anand S."/>
            <person name="Sundaram H."/>
            <person name="Kingsbury R."/>
            <person name="Harsha H.C."/>
            <person name="Nair B."/>
            <person name="Prasad T.S."/>
            <person name="Chauhan D.S."/>
            <person name="Katoch K."/>
            <person name="Katoch V.M."/>
            <person name="Kumar P."/>
            <person name="Chaerkady R."/>
            <person name="Ramachandran S."/>
            <person name="Dash D."/>
            <person name="Pandey A."/>
        </authorList>
    </citation>
    <scope>IDENTIFICATION BY MASS SPECTROMETRY [LARGE SCALE ANALYSIS]</scope>
    <source>
        <strain>ATCC 25618 / H37Rv</strain>
    </source>
</reference>
<dbReference type="EC" id="2.7.7.4" evidence="1"/>
<dbReference type="EMBL" id="AL123456">
    <property type="protein sequence ID" value="CCP44041.1"/>
    <property type="status" value="ALT_INIT"/>
    <property type="molecule type" value="Genomic_DNA"/>
</dbReference>
<dbReference type="PIR" id="A70772">
    <property type="entry name" value="A70772"/>
</dbReference>
<dbReference type="RefSeq" id="NP_215801.1">
    <property type="nucleotide sequence ID" value="NC_000962.3"/>
</dbReference>
<dbReference type="SMR" id="P9WIK1"/>
<dbReference type="FunCoup" id="P9WIK1">
    <property type="interactions" value="4"/>
</dbReference>
<dbReference type="STRING" id="83332.Rv1285"/>
<dbReference type="PaxDb" id="83332-Rv1285"/>
<dbReference type="DNASU" id="886979"/>
<dbReference type="GeneID" id="886979"/>
<dbReference type="KEGG" id="mtu:Rv1285"/>
<dbReference type="PATRIC" id="fig|83332.12.peg.1439"/>
<dbReference type="TubercuList" id="Rv1285"/>
<dbReference type="eggNOG" id="COG0175">
    <property type="taxonomic scope" value="Bacteria"/>
</dbReference>
<dbReference type="InParanoid" id="P9WIK1"/>
<dbReference type="OrthoDB" id="9772604at2"/>
<dbReference type="Reactome" id="R-MTU-936635">
    <property type="pathway name" value="Sulfate assimilation"/>
</dbReference>
<dbReference type="UniPathway" id="UPA00140">
    <property type="reaction ID" value="UER00204"/>
</dbReference>
<dbReference type="Proteomes" id="UP000001584">
    <property type="component" value="Chromosome"/>
</dbReference>
<dbReference type="GO" id="GO:0005829">
    <property type="term" value="C:cytosol"/>
    <property type="evidence" value="ECO:0000304"/>
    <property type="project" value="Reactome"/>
</dbReference>
<dbReference type="GO" id="GO:0009336">
    <property type="term" value="C:sulfate adenylyltransferase complex (ATP)"/>
    <property type="evidence" value="ECO:0000314"/>
    <property type="project" value="MTBBASE"/>
</dbReference>
<dbReference type="GO" id="GO:0005524">
    <property type="term" value="F:ATP binding"/>
    <property type="evidence" value="ECO:0007669"/>
    <property type="project" value="UniProtKB-KW"/>
</dbReference>
<dbReference type="GO" id="GO:0004781">
    <property type="term" value="F:sulfate adenylyltransferase (ATP) activity"/>
    <property type="evidence" value="ECO:0007669"/>
    <property type="project" value="UniProtKB-UniRule"/>
</dbReference>
<dbReference type="GO" id="GO:0034599">
    <property type="term" value="P:cellular response to oxidative stress"/>
    <property type="evidence" value="ECO:0000270"/>
    <property type="project" value="MTBBASE"/>
</dbReference>
<dbReference type="GO" id="GO:0010438">
    <property type="term" value="P:cellular response to sulfur starvation"/>
    <property type="evidence" value="ECO:0000270"/>
    <property type="project" value="MTBBASE"/>
</dbReference>
<dbReference type="GO" id="GO:0070814">
    <property type="term" value="P:hydrogen sulfide biosynthetic process"/>
    <property type="evidence" value="ECO:0007669"/>
    <property type="project" value="UniProtKB-UniRule"/>
</dbReference>
<dbReference type="GO" id="GO:0010134">
    <property type="term" value="P:sulfate assimilation via adenylyl sulfate reduction"/>
    <property type="evidence" value="ECO:0000314"/>
    <property type="project" value="MTBBASE"/>
</dbReference>
<dbReference type="FunFam" id="3.40.50.620:FF:000002">
    <property type="entry name" value="Sulfate adenylyltransferase subunit 2"/>
    <property type="match status" value="1"/>
</dbReference>
<dbReference type="Gene3D" id="3.40.50.620">
    <property type="entry name" value="HUPs"/>
    <property type="match status" value="1"/>
</dbReference>
<dbReference type="HAMAP" id="MF_00064">
    <property type="entry name" value="Sulf_adenylyltr_sub2"/>
    <property type="match status" value="1"/>
</dbReference>
<dbReference type="InterPro" id="IPR002500">
    <property type="entry name" value="PAPS_reduct_dom"/>
</dbReference>
<dbReference type="InterPro" id="IPR014729">
    <property type="entry name" value="Rossmann-like_a/b/a_fold"/>
</dbReference>
<dbReference type="InterPro" id="IPR011784">
    <property type="entry name" value="SO4_adenylTrfase_ssu"/>
</dbReference>
<dbReference type="InterPro" id="IPR050128">
    <property type="entry name" value="Sulfate_adenylyltrnsfr_sub2"/>
</dbReference>
<dbReference type="NCBIfam" id="TIGR02039">
    <property type="entry name" value="CysD"/>
    <property type="match status" value="1"/>
</dbReference>
<dbReference type="NCBIfam" id="NF003587">
    <property type="entry name" value="PRK05253.1"/>
    <property type="match status" value="1"/>
</dbReference>
<dbReference type="NCBIfam" id="NF009214">
    <property type="entry name" value="PRK12563.1"/>
    <property type="match status" value="1"/>
</dbReference>
<dbReference type="PANTHER" id="PTHR43196">
    <property type="entry name" value="SULFATE ADENYLYLTRANSFERASE SUBUNIT 2"/>
    <property type="match status" value="1"/>
</dbReference>
<dbReference type="PANTHER" id="PTHR43196:SF1">
    <property type="entry name" value="SULFATE ADENYLYLTRANSFERASE SUBUNIT 2"/>
    <property type="match status" value="1"/>
</dbReference>
<dbReference type="Pfam" id="PF01507">
    <property type="entry name" value="PAPS_reduct"/>
    <property type="match status" value="1"/>
</dbReference>
<dbReference type="PIRSF" id="PIRSF002936">
    <property type="entry name" value="CysDAde_trans"/>
    <property type="match status" value="1"/>
</dbReference>
<dbReference type="SUPFAM" id="SSF52402">
    <property type="entry name" value="Adenine nucleotide alpha hydrolases-like"/>
    <property type="match status" value="1"/>
</dbReference>
<accession>P9WIK1</accession>
<accession>L0T670</accession>
<accession>P65670</accession>
<accession>Q10599</accession>
<keyword id="KW-0067">ATP-binding</keyword>
<keyword id="KW-0547">Nucleotide-binding</keyword>
<keyword id="KW-0548">Nucleotidyltransferase</keyword>
<keyword id="KW-1185">Reference proteome</keyword>
<keyword id="KW-0808">Transferase</keyword>
<protein>
    <recommendedName>
        <fullName evidence="1">Sulfate adenylyltransferase subunit 2</fullName>
        <ecNumber evidence="1">2.7.7.4</ecNumber>
    </recommendedName>
    <alternativeName>
        <fullName evidence="1">ATP-sulfurylase small subunit</fullName>
    </alternativeName>
    <alternativeName>
        <fullName evidence="1">Sulfate adenylate transferase</fullName>
        <shortName evidence="1">SAT</shortName>
    </alternativeName>
</protein>